<proteinExistence type="inferred from homology"/>
<accession>A7GJZ2</accession>
<reference key="1">
    <citation type="journal article" date="2008" name="Chem. Biol. Interact.">
        <title>Extending the Bacillus cereus group genomics to putative food-borne pathogens of different toxicity.</title>
        <authorList>
            <person name="Lapidus A."/>
            <person name="Goltsman E."/>
            <person name="Auger S."/>
            <person name="Galleron N."/>
            <person name="Segurens B."/>
            <person name="Dossat C."/>
            <person name="Land M.L."/>
            <person name="Broussolle V."/>
            <person name="Brillard J."/>
            <person name="Guinebretiere M.-H."/>
            <person name="Sanchis V."/>
            <person name="Nguen-the C."/>
            <person name="Lereclus D."/>
            <person name="Richardson P."/>
            <person name="Wincker P."/>
            <person name="Weissenbach J."/>
            <person name="Ehrlich S.D."/>
            <person name="Sorokin A."/>
        </authorList>
    </citation>
    <scope>NUCLEOTIDE SEQUENCE [LARGE SCALE GENOMIC DNA]</scope>
    <source>
        <strain>DSM 22905 / CIP 110041 / 391-98 / NVH 391-98</strain>
    </source>
</reference>
<feature type="chain" id="PRO_1000082501" description="Protein-arginine kinase">
    <location>
        <begin position="1"/>
        <end position="356"/>
    </location>
</feature>
<feature type="domain" description="Phosphagen kinase C-terminal" evidence="1">
    <location>
        <begin position="24"/>
        <end position="254"/>
    </location>
</feature>
<feature type="short sequence motif" description="RDXXRA motif of the pArg binding pocket involved in allosteric regulation" evidence="1">
    <location>
        <begin position="337"/>
        <end position="342"/>
    </location>
</feature>
<feature type="binding site" evidence="1">
    <location>
        <begin position="27"/>
        <end position="31"/>
    </location>
    <ligand>
        <name>ATP</name>
        <dbReference type="ChEBI" id="CHEBI:30616"/>
    </ligand>
</feature>
<feature type="binding site" evidence="1">
    <location>
        <position position="92"/>
    </location>
    <ligand>
        <name>ATP</name>
        <dbReference type="ChEBI" id="CHEBI:30616"/>
    </ligand>
</feature>
<feature type="binding site" evidence="1">
    <location>
        <position position="125"/>
    </location>
    <ligand>
        <name>ATP</name>
        <dbReference type="ChEBI" id="CHEBI:30616"/>
    </ligand>
</feature>
<feature type="binding site" evidence="1">
    <location>
        <begin position="176"/>
        <end position="180"/>
    </location>
    <ligand>
        <name>ATP</name>
        <dbReference type="ChEBI" id="CHEBI:30616"/>
    </ligand>
</feature>
<feature type="binding site" evidence="1">
    <location>
        <begin position="207"/>
        <end position="212"/>
    </location>
    <ligand>
        <name>ATP</name>
        <dbReference type="ChEBI" id="CHEBI:30616"/>
    </ligand>
</feature>
<protein>
    <recommendedName>
        <fullName evidence="1">Protein-arginine kinase</fullName>
        <ecNumber evidence="1">2.7.14.1</ecNumber>
    </recommendedName>
</protein>
<name>MCSB_BACCN</name>
<organism>
    <name type="scientific">Bacillus cytotoxicus (strain DSM 22905 / CIP 110041 / 391-98 / NVH 391-98)</name>
    <dbReference type="NCBI Taxonomy" id="315749"/>
    <lineage>
        <taxon>Bacteria</taxon>
        <taxon>Bacillati</taxon>
        <taxon>Bacillota</taxon>
        <taxon>Bacilli</taxon>
        <taxon>Bacillales</taxon>
        <taxon>Bacillaceae</taxon>
        <taxon>Bacillus</taxon>
        <taxon>Bacillus cereus group</taxon>
    </lineage>
</organism>
<dbReference type="EC" id="2.7.14.1" evidence="1"/>
<dbReference type="EMBL" id="CP000764">
    <property type="protein sequence ID" value="ABS20450.1"/>
    <property type="molecule type" value="Genomic_DNA"/>
</dbReference>
<dbReference type="RefSeq" id="WP_011983219.1">
    <property type="nucleotide sequence ID" value="NC_009674.1"/>
</dbReference>
<dbReference type="SMR" id="A7GJZ2"/>
<dbReference type="STRING" id="315749.Bcer98_0075"/>
<dbReference type="GeneID" id="33895396"/>
<dbReference type="KEGG" id="bcy:Bcer98_0075"/>
<dbReference type="eggNOG" id="COG3869">
    <property type="taxonomic scope" value="Bacteria"/>
</dbReference>
<dbReference type="HOGENOM" id="CLU_066591_1_0_9"/>
<dbReference type="OrthoDB" id="9791353at2"/>
<dbReference type="Proteomes" id="UP000002300">
    <property type="component" value="Chromosome"/>
</dbReference>
<dbReference type="GO" id="GO:0005615">
    <property type="term" value="C:extracellular space"/>
    <property type="evidence" value="ECO:0007669"/>
    <property type="project" value="TreeGrafter"/>
</dbReference>
<dbReference type="GO" id="GO:0005524">
    <property type="term" value="F:ATP binding"/>
    <property type="evidence" value="ECO:0007669"/>
    <property type="project" value="UniProtKB-KW"/>
</dbReference>
<dbReference type="GO" id="GO:0004111">
    <property type="term" value="F:creatine kinase activity"/>
    <property type="evidence" value="ECO:0007669"/>
    <property type="project" value="InterPro"/>
</dbReference>
<dbReference type="GO" id="GO:0004672">
    <property type="term" value="F:protein kinase activity"/>
    <property type="evidence" value="ECO:0007669"/>
    <property type="project" value="UniProtKB-UniRule"/>
</dbReference>
<dbReference type="GO" id="GO:0046314">
    <property type="term" value="P:phosphocreatine biosynthetic process"/>
    <property type="evidence" value="ECO:0007669"/>
    <property type="project" value="InterPro"/>
</dbReference>
<dbReference type="CDD" id="cd07930">
    <property type="entry name" value="bacterial_phosphagen_kinase"/>
    <property type="match status" value="1"/>
</dbReference>
<dbReference type="FunFam" id="3.30.590.10:FF:000007">
    <property type="entry name" value="Protein-arginine kinase"/>
    <property type="match status" value="1"/>
</dbReference>
<dbReference type="Gene3D" id="3.30.590.10">
    <property type="entry name" value="Glutamine synthetase/guanido kinase, catalytic domain"/>
    <property type="match status" value="1"/>
</dbReference>
<dbReference type="HAMAP" id="MF_00602">
    <property type="entry name" value="Prot_Arg_kinase"/>
    <property type="match status" value="1"/>
</dbReference>
<dbReference type="InterPro" id="IPR023660">
    <property type="entry name" value="Arg_Kinase"/>
</dbReference>
<dbReference type="InterPro" id="IPR000749">
    <property type="entry name" value="ATP-guanido_PTrfase"/>
</dbReference>
<dbReference type="InterPro" id="IPR022415">
    <property type="entry name" value="ATP-guanido_PTrfase_AS"/>
</dbReference>
<dbReference type="InterPro" id="IPR022414">
    <property type="entry name" value="ATP-guanido_PTrfase_cat"/>
</dbReference>
<dbReference type="InterPro" id="IPR014746">
    <property type="entry name" value="Gln_synth/guanido_kin_cat_dom"/>
</dbReference>
<dbReference type="NCBIfam" id="NF002194">
    <property type="entry name" value="PRK01059.1-4"/>
    <property type="match status" value="1"/>
</dbReference>
<dbReference type="NCBIfam" id="NF002195">
    <property type="entry name" value="PRK01059.1-5"/>
    <property type="match status" value="1"/>
</dbReference>
<dbReference type="PANTHER" id="PTHR11547:SF38">
    <property type="entry name" value="ARGININE KINASE 1-RELATED"/>
    <property type="match status" value="1"/>
</dbReference>
<dbReference type="PANTHER" id="PTHR11547">
    <property type="entry name" value="ARGININE OR CREATINE KINASE"/>
    <property type="match status" value="1"/>
</dbReference>
<dbReference type="Pfam" id="PF00217">
    <property type="entry name" value="ATP-gua_Ptrans"/>
    <property type="match status" value="1"/>
</dbReference>
<dbReference type="SUPFAM" id="SSF55931">
    <property type="entry name" value="Glutamine synthetase/guanido kinase"/>
    <property type="match status" value="1"/>
</dbReference>
<dbReference type="PROSITE" id="PS00112">
    <property type="entry name" value="PHOSPHAGEN_KINASE"/>
    <property type="match status" value="1"/>
</dbReference>
<dbReference type="PROSITE" id="PS51510">
    <property type="entry name" value="PHOSPHAGEN_KINASE_C"/>
    <property type="match status" value="1"/>
</dbReference>
<comment type="function">
    <text evidence="1">Catalyzes the specific phosphorylation of arginine residues in a large number of proteins. Is part of the bacterial stress response system. Protein arginine phosphorylation has a physiologically important role and is involved in the regulation of many critical cellular processes, such as protein homeostasis, motility, competence, and stringent and stress responses, by regulating gene expression and protein activity.</text>
</comment>
<comment type="catalytic activity">
    <reaction evidence="1">
        <text>L-arginyl-[protein] + ATP = N(omega)-phospho-L-arginyl-[protein] + ADP + H(+)</text>
        <dbReference type="Rhea" id="RHEA:43384"/>
        <dbReference type="Rhea" id="RHEA-COMP:10532"/>
        <dbReference type="Rhea" id="RHEA-COMP:10533"/>
        <dbReference type="ChEBI" id="CHEBI:15378"/>
        <dbReference type="ChEBI" id="CHEBI:29965"/>
        <dbReference type="ChEBI" id="CHEBI:30616"/>
        <dbReference type="ChEBI" id="CHEBI:83226"/>
        <dbReference type="ChEBI" id="CHEBI:456216"/>
        <dbReference type="EC" id="2.7.14.1"/>
    </reaction>
</comment>
<comment type="activity regulation">
    <text evidence="1">Appears to be allosterically activated by the binding of pArg-containing polypeptides to the pArg-binding pocket localized in the C-terminal domain of McsB.</text>
</comment>
<comment type="similarity">
    <text evidence="1">Belongs to the ATP:guanido phosphotransferase family.</text>
</comment>
<keyword id="KW-0021">Allosteric enzyme</keyword>
<keyword id="KW-0067">ATP-binding</keyword>
<keyword id="KW-0418">Kinase</keyword>
<keyword id="KW-0547">Nucleotide-binding</keyword>
<keyword id="KW-0808">Transferase</keyword>
<evidence type="ECO:0000255" key="1">
    <source>
        <dbReference type="HAMAP-Rule" id="MF_00602"/>
    </source>
</evidence>
<sequence length="356" mass="40079">MSLDRIMNEAISPWMKGDGPDSDIVLSTRIRLARNLKNYHFPIMQTAEEANQITELFQQKLVNKTMRDFGSFELLKMNELTPLQRRVLVEKHLISPNLAETEFGACILSESEHISVMLNEEDHVRIQCLFPGLQLSEALQSANKIDNVFEEVVEYAFDEELGYVTSCPTNVGTGLRASVMIHLPALVLTKRINRIIQAIQQLGLVVRGIYGEGSEALGNIFQVSNQMTLGKSEEDIIADLTSVIHQLIQQEKAARELIVKNSSIELEDKVYRSYGILAHSRLIQSAEAATCLSDVRLGIDLGYIKDVSRNILTELMVLTQPGILQQYAGGQLGPEERDYRRAALIRERLRIEENEA</sequence>
<gene>
    <name evidence="1" type="primary">mcsB</name>
    <name type="ordered locus">Bcer98_0075</name>
</gene>